<geneLocation type="chloroplast"/>
<gene>
    <name evidence="1" type="primary">rbcL</name>
</gene>
<dbReference type="EC" id="4.1.1.39" evidence="1"/>
<dbReference type="EMBL" id="M83542">
    <property type="protein sequence ID" value="AAA84173.1"/>
    <property type="molecule type" value="Genomic_DNA"/>
</dbReference>
<dbReference type="RefSeq" id="YP_010500665.1">
    <property type="nucleotide sequence ID" value="NC_066897.1"/>
</dbReference>
<dbReference type="SMR" id="P25830"/>
<dbReference type="GeneID" id="75507730"/>
<dbReference type="GO" id="GO:0009507">
    <property type="term" value="C:chloroplast"/>
    <property type="evidence" value="ECO:0007669"/>
    <property type="project" value="UniProtKB-SubCell"/>
</dbReference>
<dbReference type="GO" id="GO:0000287">
    <property type="term" value="F:magnesium ion binding"/>
    <property type="evidence" value="ECO:0007669"/>
    <property type="project" value="UniProtKB-UniRule"/>
</dbReference>
<dbReference type="GO" id="GO:0004497">
    <property type="term" value="F:monooxygenase activity"/>
    <property type="evidence" value="ECO:0007669"/>
    <property type="project" value="UniProtKB-KW"/>
</dbReference>
<dbReference type="GO" id="GO:0016984">
    <property type="term" value="F:ribulose-bisphosphate carboxylase activity"/>
    <property type="evidence" value="ECO:0007669"/>
    <property type="project" value="UniProtKB-UniRule"/>
</dbReference>
<dbReference type="GO" id="GO:0009853">
    <property type="term" value="P:photorespiration"/>
    <property type="evidence" value="ECO:0007669"/>
    <property type="project" value="UniProtKB-KW"/>
</dbReference>
<dbReference type="GO" id="GO:0019253">
    <property type="term" value="P:reductive pentose-phosphate cycle"/>
    <property type="evidence" value="ECO:0007669"/>
    <property type="project" value="UniProtKB-UniRule"/>
</dbReference>
<dbReference type="CDD" id="cd08212">
    <property type="entry name" value="RuBisCO_large_I"/>
    <property type="match status" value="1"/>
</dbReference>
<dbReference type="FunFam" id="3.20.20.110:FF:000001">
    <property type="entry name" value="Ribulose bisphosphate carboxylase large chain"/>
    <property type="match status" value="1"/>
</dbReference>
<dbReference type="FunFam" id="3.30.70.150:FF:000001">
    <property type="entry name" value="Ribulose bisphosphate carboxylase large chain"/>
    <property type="match status" value="1"/>
</dbReference>
<dbReference type="Gene3D" id="3.20.20.110">
    <property type="entry name" value="Ribulose bisphosphate carboxylase, large subunit, C-terminal domain"/>
    <property type="match status" value="1"/>
</dbReference>
<dbReference type="Gene3D" id="3.30.70.150">
    <property type="entry name" value="RuBisCO large subunit, N-terminal domain"/>
    <property type="match status" value="1"/>
</dbReference>
<dbReference type="HAMAP" id="MF_01338">
    <property type="entry name" value="RuBisCO_L_type1"/>
    <property type="match status" value="1"/>
</dbReference>
<dbReference type="InterPro" id="IPR033966">
    <property type="entry name" value="RuBisCO"/>
</dbReference>
<dbReference type="InterPro" id="IPR020878">
    <property type="entry name" value="RuBisCo_large_chain_AS"/>
</dbReference>
<dbReference type="InterPro" id="IPR000685">
    <property type="entry name" value="RuBisCO_lsu_C"/>
</dbReference>
<dbReference type="InterPro" id="IPR036376">
    <property type="entry name" value="RuBisCO_lsu_C_sf"/>
</dbReference>
<dbReference type="InterPro" id="IPR017443">
    <property type="entry name" value="RuBisCO_lsu_fd_N"/>
</dbReference>
<dbReference type="InterPro" id="IPR036422">
    <property type="entry name" value="RuBisCO_lsu_N_sf"/>
</dbReference>
<dbReference type="InterPro" id="IPR020888">
    <property type="entry name" value="RuBisCO_lsuI"/>
</dbReference>
<dbReference type="NCBIfam" id="NF003252">
    <property type="entry name" value="PRK04208.1"/>
    <property type="match status" value="1"/>
</dbReference>
<dbReference type="PANTHER" id="PTHR42704">
    <property type="entry name" value="RIBULOSE BISPHOSPHATE CARBOXYLASE"/>
    <property type="match status" value="1"/>
</dbReference>
<dbReference type="PANTHER" id="PTHR42704:SF15">
    <property type="entry name" value="RIBULOSE BISPHOSPHATE CARBOXYLASE LARGE CHAIN"/>
    <property type="match status" value="1"/>
</dbReference>
<dbReference type="Pfam" id="PF00016">
    <property type="entry name" value="RuBisCO_large"/>
    <property type="match status" value="1"/>
</dbReference>
<dbReference type="Pfam" id="PF02788">
    <property type="entry name" value="RuBisCO_large_N"/>
    <property type="match status" value="1"/>
</dbReference>
<dbReference type="SFLD" id="SFLDG01052">
    <property type="entry name" value="RuBisCO"/>
    <property type="match status" value="1"/>
</dbReference>
<dbReference type="SFLD" id="SFLDS00014">
    <property type="entry name" value="RuBisCO"/>
    <property type="match status" value="1"/>
</dbReference>
<dbReference type="SFLD" id="SFLDG00301">
    <property type="entry name" value="RuBisCO-like_proteins"/>
    <property type="match status" value="1"/>
</dbReference>
<dbReference type="SUPFAM" id="SSF51649">
    <property type="entry name" value="RuBisCo, C-terminal domain"/>
    <property type="match status" value="1"/>
</dbReference>
<dbReference type="SUPFAM" id="SSF54966">
    <property type="entry name" value="RuBisCO, large subunit, small (N-terminal) domain"/>
    <property type="match status" value="1"/>
</dbReference>
<dbReference type="PROSITE" id="PS00157">
    <property type="entry name" value="RUBISCO_LARGE"/>
    <property type="match status" value="1"/>
</dbReference>
<evidence type="ECO:0000255" key="1">
    <source>
        <dbReference type="HAMAP-Rule" id="MF_01338"/>
    </source>
</evidence>
<comment type="function">
    <text evidence="1">RuBisCO catalyzes two reactions: the carboxylation of D-ribulose 1,5-bisphosphate, the primary event in carbon dioxide fixation, as well as the oxidative fragmentation of the pentose substrate in the photorespiration process. Both reactions occur simultaneously and in competition at the same active site.</text>
</comment>
<comment type="catalytic activity">
    <reaction evidence="1">
        <text>2 (2R)-3-phosphoglycerate + 2 H(+) = D-ribulose 1,5-bisphosphate + CO2 + H2O</text>
        <dbReference type="Rhea" id="RHEA:23124"/>
        <dbReference type="ChEBI" id="CHEBI:15377"/>
        <dbReference type="ChEBI" id="CHEBI:15378"/>
        <dbReference type="ChEBI" id="CHEBI:16526"/>
        <dbReference type="ChEBI" id="CHEBI:57870"/>
        <dbReference type="ChEBI" id="CHEBI:58272"/>
        <dbReference type="EC" id="4.1.1.39"/>
    </reaction>
</comment>
<comment type="catalytic activity">
    <reaction evidence="1">
        <text>D-ribulose 1,5-bisphosphate + O2 = 2-phosphoglycolate + (2R)-3-phosphoglycerate + 2 H(+)</text>
        <dbReference type="Rhea" id="RHEA:36631"/>
        <dbReference type="ChEBI" id="CHEBI:15378"/>
        <dbReference type="ChEBI" id="CHEBI:15379"/>
        <dbReference type="ChEBI" id="CHEBI:57870"/>
        <dbReference type="ChEBI" id="CHEBI:58033"/>
        <dbReference type="ChEBI" id="CHEBI:58272"/>
    </reaction>
</comment>
<comment type="cofactor">
    <cofactor evidence="1">
        <name>Mg(2+)</name>
        <dbReference type="ChEBI" id="CHEBI:18420"/>
    </cofactor>
    <text evidence="1">Binds 1 Mg(2+) ion per subunit.</text>
</comment>
<comment type="subunit">
    <text evidence="1">Heterohexadecamer of 8 large chains and 8 small chains; disulfide-linked. The disulfide link is formed within the large subunit homodimers.</text>
</comment>
<comment type="subcellular location">
    <subcellularLocation>
        <location>Plastid</location>
        <location>Chloroplast</location>
    </subcellularLocation>
</comment>
<comment type="PTM">
    <text evidence="1">The disulfide bond which can form in the large chain dimeric partners within the hexadecamer appears to be associated with oxidative stress and protein turnover.</text>
</comment>
<comment type="miscellaneous">
    <text evidence="1">The basic functional RuBisCO is composed of a large chain homodimer in a 'head-to-tail' conformation. In form I RuBisCO this homodimer is arranged in a barrel-like tetramer with the small subunits forming a tetrameric 'cap' on each end of the 'barrel'.</text>
</comment>
<comment type="similarity">
    <text evidence="1">Belongs to the RuBisCO large chain family. Type I subfamily.</text>
</comment>
<proteinExistence type="inferred from homology"/>
<keyword id="KW-0007">Acetylation</keyword>
<keyword id="KW-0113">Calvin cycle</keyword>
<keyword id="KW-0120">Carbon dioxide fixation</keyword>
<keyword id="KW-0150">Chloroplast</keyword>
<keyword id="KW-1015">Disulfide bond</keyword>
<keyword id="KW-0456">Lyase</keyword>
<keyword id="KW-0460">Magnesium</keyword>
<keyword id="KW-0479">Metal-binding</keyword>
<keyword id="KW-0488">Methylation</keyword>
<keyword id="KW-0503">Monooxygenase</keyword>
<keyword id="KW-0560">Oxidoreductase</keyword>
<keyword id="KW-0601">Photorespiration</keyword>
<keyword id="KW-0602">Photosynthesis</keyword>
<keyword id="KW-0934">Plastid</keyword>
<feature type="propeptide" id="PRO_0000031167" evidence="1">
    <location>
        <begin position="1"/>
        <end position="2"/>
    </location>
</feature>
<feature type="chain" id="PRO_0000031168" description="Ribulose bisphosphate carboxylase large chain">
    <location>
        <begin position="3"/>
        <end position="475"/>
    </location>
</feature>
<feature type="active site" description="Proton acceptor" evidence="1">
    <location>
        <position position="175"/>
    </location>
</feature>
<feature type="active site" description="Proton acceptor" evidence="1">
    <location>
        <position position="294"/>
    </location>
</feature>
<feature type="binding site" description="in homodimeric partner" evidence="1">
    <location>
        <position position="123"/>
    </location>
    <ligand>
        <name>substrate</name>
    </ligand>
</feature>
<feature type="binding site" evidence="1">
    <location>
        <position position="173"/>
    </location>
    <ligand>
        <name>substrate</name>
    </ligand>
</feature>
<feature type="binding site" evidence="1">
    <location>
        <position position="177"/>
    </location>
    <ligand>
        <name>substrate</name>
    </ligand>
</feature>
<feature type="binding site" description="via carbamate group" evidence="1">
    <location>
        <position position="201"/>
    </location>
    <ligand>
        <name>Mg(2+)</name>
        <dbReference type="ChEBI" id="CHEBI:18420"/>
    </ligand>
</feature>
<feature type="binding site" evidence="1">
    <location>
        <position position="203"/>
    </location>
    <ligand>
        <name>Mg(2+)</name>
        <dbReference type="ChEBI" id="CHEBI:18420"/>
    </ligand>
</feature>
<feature type="binding site" evidence="1">
    <location>
        <position position="204"/>
    </location>
    <ligand>
        <name>Mg(2+)</name>
        <dbReference type="ChEBI" id="CHEBI:18420"/>
    </ligand>
</feature>
<feature type="binding site" evidence="1">
    <location>
        <position position="295"/>
    </location>
    <ligand>
        <name>substrate</name>
    </ligand>
</feature>
<feature type="binding site" evidence="1">
    <location>
        <position position="327"/>
    </location>
    <ligand>
        <name>substrate</name>
    </ligand>
</feature>
<feature type="binding site" evidence="1">
    <location>
        <position position="379"/>
    </location>
    <ligand>
        <name>substrate</name>
    </ligand>
</feature>
<feature type="site" description="Transition state stabilizer" evidence="1">
    <location>
        <position position="334"/>
    </location>
</feature>
<feature type="modified residue" description="N-acetylproline" evidence="1">
    <location>
        <position position="3"/>
    </location>
</feature>
<feature type="modified residue" description="N6,N6,N6-trimethyllysine" evidence="1">
    <location>
        <position position="14"/>
    </location>
</feature>
<feature type="modified residue" description="N6-carboxylysine" evidence="1">
    <location>
        <position position="201"/>
    </location>
</feature>
<feature type="disulfide bond" description="Interchain; in linked form" evidence="1">
    <location>
        <position position="247"/>
    </location>
</feature>
<protein>
    <recommendedName>
        <fullName evidence="1">Ribulose bisphosphate carboxylase large chain</fullName>
        <shortName evidence="1">RuBisCO large subunit</shortName>
        <ecNumber evidence="1">4.1.1.39</ecNumber>
    </recommendedName>
</protein>
<sequence length="475" mass="52666">MSPQTETKSSVGFKAGVKDYKLTYYTPEYETLDTDILAAFRVTPQPGVPPEEAGAAVAAESSTGTWTTVWTDGLTSLDRYKGRCYHIEPVAGEENQYICYVAYPLDLFEEGSVTNMFTSIVGNVFGFKALRALRLEDLRVPVAYIKTFQGPPHGIQVERDKLNKYGRPLLGCTIKPKLGLSAKNYGRAVYECLRGGLDFTKDDENVNSQPFMRWRDRFLFCAEAIYKAQAETGEIKGHYLNATAGTCEEMIKRAVFARELGVPIVMHDYITGGFTANTSLAHYCRDNGLLLHIHRAMHAVIDRQKNHGMHFRVLAKALRLSGGDHIHAGTVVGKLEGEREITLGFVDLLRDDFTEKDRSRGIYFTQSWVSTPGVLPVASGGIHVWHMPALTEIFGDDSVLQFGGGTLGHPWGNAPGAVANRVALEACVQARNEGRDLAREGNTIIREACKWSPELAAACEVWKEIKFEFQAMDTI</sequence>
<accession>P25830</accession>
<name>RBL_CERGL</name>
<organism>
    <name type="scientific">Cerastium glomeratum</name>
    <name type="common">Sticky chickweed</name>
    <name type="synonym">Mouse-eared chickweed</name>
    <dbReference type="NCBI Taxonomy" id="3580"/>
    <lineage>
        <taxon>Eukaryota</taxon>
        <taxon>Viridiplantae</taxon>
        <taxon>Streptophyta</taxon>
        <taxon>Embryophyta</taxon>
        <taxon>Tracheophyta</taxon>
        <taxon>Spermatophyta</taxon>
        <taxon>Magnoliopsida</taxon>
        <taxon>eudicotyledons</taxon>
        <taxon>Gunneridae</taxon>
        <taxon>Pentapetalae</taxon>
        <taxon>Caryophyllales</taxon>
        <taxon>Caryophyllaceae</taxon>
        <taxon>Alsineae</taxon>
        <taxon>Cerastium</taxon>
    </lineage>
</organism>
<reference key="1">
    <citation type="submission" date="1992-02" db="EMBL/GenBank/DDBJ databases">
        <title>Phylogeny of the Caryophyllales.</title>
        <authorList>
            <person name="Manhart J.R."/>
            <person name="Hugh J.H."/>
            <person name="Wilson D."/>
        </authorList>
    </citation>
    <scope>NUCLEOTIDE SEQUENCE [GENOMIC DNA]</scope>
</reference>